<gene>
    <name evidence="2" type="primary">infB</name>
    <name type="ordered locus">SG0377</name>
</gene>
<sequence>MTDVTVKSLAAEIQTPVDRLVQQFADAGIDKTAVDSVTQQEKETLLAHLNRDRGAAPNKLTLQRKTRSTLNIPSTGGKSKSVQIEVRKKRTYVQRDPQAQEQAEAEEQARREAEELAQHQVQRDAEEKAKRAAEDKAKREAAEQAKRVAAESDKLTNQQTNTMTKSPQATEKARREAEAAELRRKAEEETRRKVEEKARQVAEEARRMAEERGGNWDNAPEPAEEDTTDYHVNTSHHAREAEDENDRKVEGDRRSRTRGGKATKQKKTSRLSESKADREEARAVGRGGKGKRRPSTLTQGFNKPAQAVNRDVVIGETITVAELANKMAVKGSQVIKAMMKLGAMATINQVIDQETAQLVAEEMGHKVILRRENELEESVMSDRDTGSSAAAESRAPVVTIMGHVDHGKTSLLDYIRSTKVAAGEAGGITQHIGAYHVETDNGMITFLDTPGHAAFTAMRARGAQATDIVVLVVAADDGVMPQTIEAIQHAKAAKVPVVVAVNKIDKPEADPDRVKNELTQYGVIPEEWGGESQFVHVSAKSGAGIDELLDAILLQAEVLELKAIRNGMASGVVIESFLDKGRGPVATVLVREGTLNRGDIVLCGFEYGRVRAMRDEVGRDVASAGPSIPVEILGLSGVPAAGDEATVVRDEKKAREVALYRQGKFREVKLARQQKSKLENMFANMTEGEVSELNIVLKSDVQGSAEAISDALEKLSNDEVKVKIVGSGVGGITETDATLAAASNAILLGFNVRADASARRVIEAENLDLRYYSVIYDLIDEVKQAMSGMLAPEYKQEIIGLAEVRNVFRSPKFGAIAGCMVTEGVVKRHNKIRVLRENVVIYEGELESLRRFKDDVNEVRNGMECGIGVKNYNDVRSGDVIEVFETIEIQRTIA</sequence>
<evidence type="ECO:0000250" key="1"/>
<evidence type="ECO:0000255" key="2">
    <source>
        <dbReference type="HAMAP-Rule" id="MF_00100"/>
    </source>
</evidence>
<evidence type="ECO:0000256" key="3">
    <source>
        <dbReference type="SAM" id="MobiDB-lite"/>
    </source>
</evidence>
<protein>
    <recommendedName>
        <fullName evidence="2">Translation initiation factor IF-2</fullName>
    </recommendedName>
</protein>
<accession>Q2NW23</accession>
<name>IF2_SODGM</name>
<dbReference type="EMBL" id="AP008232">
    <property type="protein sequence ID" value="BAE73652.1"/>
    <property type="molecule type" value="Genomic_DNA"/>
</dbReference>
<dbReference type="RefSeq" id="WP_011410240.1">
    <property type="nucleotide sequence ID" value="NC_007712.1"/>
</dbReference>
<dbReference type="SMR" id="Q2NW23"/>
<dbReference type="STRING" id="343509.SG0377"/>
<dbReference type="KEGG" id="sgl:SG0377"/>
<dbReference type="eggNOG" id="COG0532">
    <property type="taxonomic scope" value="Bacteria"/>
</dbReference>
<dbReference type="HOGENOM" id="CLU_006301_6_3_6"/>
<dbReference type="OrthoDB" id="9811804at2"/>
<dbReference type="BioCyc" id="SGLO343509:SGP1_RS03550-MONOMER"/>
<dbReference type="Proteomes" id="UP000001932">
    <property type="component" value="Chromosome"/>
</dbReference>
<dbReference type="GO" id="GO:0005829">
    <property type="term" value="C:cytosol"/>
    <property type="evidence" value="ECO:0007669"/>
    <property type="project" value="TreeGrafter"/>
</dbReference>
<dbReference type="GO" id="GO:0005525">
    <property type="term" value="F:GTP binding"/>
    <property type="evidence" value="ECO:0007669"/>
    <property type="project" value="UniProtKB-KW"/>
</dbReference>
<dbReference type="GO" id="GO:0003924">
    <property type="term" value="F:GTPase activity"/>
    <property type="evidence" value="ECO:0007669"/>
    <property type="project" value="UniProtKB-UniRule"/>
</dbReference>
<dbReference type="GO" id="GO:0097216">
    <property type="term" value="F:guanosine tetraphosphate binding"/>
    <property type="evidence" value="ECO:0007669"/>
    <property type="project" value="UniProtKB-ARBA"/>
</dbReference>
<dbReference type="GO" id="GO:0003743">
    <property type="term" value="F:translation initiation factor activity"/>
    <property type="evidence" value="ECO:0007669"/>
    <property type="project" value="UniProtKB-UniRule"/>
</dbReference>
<dbReference type="CDD" id="cd01887">
    <property type="entry name" value="IF2_eIF5B"/>
    <property type="match status" value="1"/>
</dbReference>
<dbReference type="CDD" id="cd03702">
    <property type="entry name" value="IF2_mtIF2_II"/>
    <property type="match status" value="1"/>
</dbReference>
<dbReference type="CDD" id="cd03692">
    <property type="entry name" value="mtIF2_IVc"/>
    <property type="match status" value="1"/>
</dbReference>
<dbReference type="FunFam" id="2.40.30.10:FF:000007">
    <property type="entry name" value="Translation initiation factor IF-2"/>
    <property type="match status" value="1"/>
</dbReference>
<dbReference type="FunFam" id="2.40.30.10:FF:000008">
    <property type="entry name" value="Translation initiation factor IF-2"/>
    <property type="match status" value="1"/>
</dbReference>
<dbReference type="FunFam" id="3.30.56.50:FF:000001">
    <property type="entry name" value="Translation initiation factor IF-2"/>
    <property type="match status" value="1"/>
</dbReference>
<dbReference type="FunFam" id="3.40.50.10050:FF:000001">
    <property type="entry name" value="Translation initiation factor IF-2"/>
    <property type="match status" value="1"/>
</dbReference>
<dbReference type="FunFam" id="3.40.50.300:FF:000019">
    <property type="entry name" value="Translation initiation factor IF-2"/>
    <property type="match status" value="1"/>
</dbReference>
<dbReference type="Gene3D" id="3.40.50.300">
    <property type="entry name" value="P-loop containing nucleotide triphosphate hydrolases"/>
    <property type="match status" value="1"/>
</dbReference>
<dbReference type="Gene3D" id="3.30.56.50">
    <property type="entry name" value="Putative DNA-binding domain, N-terminal subdomain of bacterial translation initiation factor IF2"/>
    <property type="match status" value="1"/>
</dbReference>
<dbReference type="Gene3D" id="2.40.30.10">
    <property type="entry name" value="Translation factors"/>
    <property type="match status" value="2"/>
</dbReference>
<dbReference type="Gene3D" id="3.40.50.10050">
    <property type="entry name" value="Translation initiation factor IF- 2, domain 3"/>
    <property type="match status" value="1"/>
</dbReference>
<dbReference type="HAMAP" id="MF_00100_B">
    <property type="entry name" value="IF_2_B"/>
    <property type="match status" value="1"/>
</dbReference>
<dbReference type="InterPro" id="IPR009061">
    <property type="entry name" value="DNA-bd_dom_put_sf"/>
</dbReference>
<dbReference type="InterPro" id="IPR053905">
    <property type="entry name" value="EF-G-like_DII"/>
</dbReference>
<dbReference type="InterPro" id="IPR004161">
    <property type="entry name" value="EFTu-like_2"/>
</dbReference>
<dbReference type="InterPro" id="IPR013575">
    <property type="entry name" value="IF2_assoc_dom_bac"/>
</dbReference>
<dbReference type="InterPro" id="IPR044145">
    <property type="entry name" value="IF2_II"/>
</dbReference>
<dbReference type="InterPro" id="IPR006847">
    <property type="entry name" value="IF2_N"/>
</dbReference>
<dbReference type="InterPro" id="IPR027417">
    <property type="entry name" value="P-loop_NTPase"/>
</dbReference>
<dbReference type="InterPro" id="IPR005225">
    <property type="entry name" value="Small_GTP-bd"/>
</dbReference>
<dbReference type="InterPro" id="IPR000795">
    <property type="entry name" value="T_Tr_GTP-bd_dom"/>
</dbReference>
<dbReference type="InterPro" id="IPR000178">
    <property type="entry name" value="TF_IF2_bacterial-like"/>
</dbReference>
<dbReference type="InterPro" id="IPR015760">
    <property type="entry name" value="TIF_IF2"/>
</dbReference>
<dbReference type="InterPro" id="IPR023115">
    <property type="entry name" value="TIF_IF2_dom3"/>
</dbReference>
<dbReference type="InterPro" id="IPR036925">
    <property type="entry name" value="TIF_IF2_dom3_sf"/>
</dbReference>
<dbReference type="InterPro" id="IPR009000">
    <property type="entry name" value="Transl_B-barrel_sf"/>
</dbReference>
<dbReference type="NCBIfam" id="TIGR00487">
    <property type="entry name" value="IF-2"/>
    <property type="match status" value="1"/>
</dbReference>
<dbReference type="NCBIfam" id="TIGR00231">
    <property type="entry name" value="small_GTP"/>
    <property type="match status" value="1"/>
</dbReference>
<dbReference type="PANTHER" id="PTHR43381:SF5">
    <property type="entry name" value="TR-TYPE G DOMAIN-CONTAINING PROTEIN"/>
    <property type="match status" value="1"/>
</dbReference>
<dbReference type="PANTHER" id="PTHR43381">
    <property type="entry name" value="TRANSLATION INITIATION FACTOR IF-2-RELATED"/>
    <property type="match status" value="1"/>
</dbReference>
<dbReference type="Pfam" id="PF22042">
    <property type="entry name" value="EF-G_D2"/>
    <property type="match status" value="1"/>
</dbReference>
<dbReference type="Pfam" id="PF00009">
    <property type="entry name" value="GTP_EFTU"/>
    <property type="match status" value="1"/>
</dbReference>
<dbReference type="Pfam" id="PF03144">
    <property type="entry name" value="GTP_EFTU_D2"/>
    <property type="match status" value="1"/>
</dbReference>
<dbReference type="Pfam" id="PF11987">
    <property type="entry name" value="IF-2"/>
    <property type="match status" value="1"/>
</dbReference>
<dbReference type="Pfam" id="PF08364">
    <property type="entry name" value="IF2_assoc"/>
    <property type="match status" value="1"/>
</dbReference>
<dbReference type="Pfam" id="PF04760">
    <property type="entry name" value="IF2_N"/>
    <property type="match status" value="2"/>
</dbReference>
<dbReference type="SUPFAM" id="SSF52156">
    <property type="entry name" value="Initiation factor IF2/eIF5b, domain 3"/>
    <property type="match status" value="1"/>
</dbReference>
<dbReference type="SUPFAM" id="SSF52540">
    <property type="entry name" value="P-loop containing nucleoside triphosphate hydrolases"/>
    <property type="match status" value="1"/>
</dbReference>
<dbReference type="SUPFAM" id="SSF46955">
    <property type="entry name" value="Putative DNA-binding domain"/>
    <property type="match status" value="1"/>
</dbReference>
<dbReference type="SUPFAM" id="SSF50447">
    <property type="entry name" value="Translation proteins"/>
    <property type="match status" value="2"/>
</dbReference>
<dbReference type="PROSITE" id="PS51722">
    <property type="entry name" value="G_TR_2"/>
    <property type="match status" value="1"/>
</dbReference>
<dbReference type="PROSITE" id="PS01176">
    <property type="entry name" value="IF2"/>
    <property type="match status" value="1"/>
</dbReference>
<organism>
    <name type="scientific">Sodalis glossinidius (strain morsitans)</name>
    <dbReference type="NCBI Taxonomy" id="343509"/>
    <lineage>
        <taxon>Bacteria</taxon>
        <taxon>Pseudomonadati</taxon>
        <taxon>Pseudomonadota</taxon>
        <taxon>Gammaproteobacteria</taxon>
        <taxon>Enterobacterales</taxon>
        <taxon>Bruguierivoracaceae</taxon>
        <taxon>Sodalis</taxon>
    </lineage>
</organism>
<proteinExistence type="inferred from homology"/>
<reference key="1">
    <citation type="journal article" date="2006" name="Genome Res.">
        <title>Massive genome erosion and functional adaptations provide insights into the symbiotic lifestyle of Sodalis glossinidius in the tsetse host.</title>
        <authorList>
            <person name="Toh H."/>
            <person name="Weiss B.L."/>
            <person name="Perkin S.A.H."/>
            <person name="Yamashita A."/>
            <person name="Oshima K."/>
            <person name="Hattori M."/>
            <person name="Aksoy S."/>
        </authorList>
    </citation>
    <scope>NUCLEOTIDE SEQUENCE [LARGE SCALE GENOMIC DNA]</scope>
    <source>
        <strain>morsitans</strain>
    </source>
</reference>
<comment type="function">
    <text evidence="2">One of the essential components for the initiation of protein synthesis. Protects formylmethionyl-tRNA from spontaneous hydrolysis and promotes its binding to the 30S ribosomal subunits. Also involved in the hydrolysis of GTP during the formation of the 70S ribosomal complex.</text>
</comment>
<comment type="subcellular location">
    <subcellularLocation>
        <location evidence="2">Cytoplasm</location>
    </subcellularLocation>
</comment>
<comment type="similarity">
    <text evidence="2">Belongs to the TRAFAC class translation factor GTPase superfamily. Classic translation factor GTPase family. IF-2 subfamily.</text>
</comment>
<keyword id="KW-0963">Cytoplasm</keyword>
<keyword id="KW-0342">GTP-binding</keyword>
<keyword id="KW-0396">Initiation factor</keyword>
<keyword id="KW-0547">Nucleotide-binding</keyword>
<keyword id="KW-0648">Protein biosynthesis</keyword>
<feature type="chain" id="PRO_1000008341" description="Translation initiation factor IF-2">
    <location>
        <begin position="1"/>
        <end position="894"/>
    </location>
</feature>
<feature type="domain" description="tr-type G">
    <location>
        <begin position="393"/>
        <end position="562"/>
    </location>
</feature>
<feature type="region of interest" description="Disordered" evidence="3">
    <location>
        <begin position="52"/>
        <end position="301"/>
    </location>
</feature>
<feature type="region of interest" description="G1" evidence="1">
    <location>
        <begin position="402"/>
        <end position="409"/>
    </location>
</feature>
<feature type="region of interest" description="G2" evidence="1">
    <location>
        <begin position="427"/>
        <end position="431"/>
    </location>
</feature>
<feature type="region of interest" description="G3" evidence="1">
    <location>
        <begin position="448"/>
        <end position="451"/>
    </location>
</feature>
<feature type="region of interest" description="G4" evidence="1">
    <location>
        <begin position="502"/>
        <end position="505"/>
    </location>
</feature>
<feature type="region of interest" description="G5" evidence="1">
    <location>
        <begin position="538"/>
        <end position="540"/>
    </location>
</feature>
<feature type="compositionally biased region" description="Polar residues" evidence="3">
    <location>
        <begin position="68"/>
        <end position="82"/>
    </location>
</feature>
<feature type="compositionally biased region" description="Basic and acidic residues" evidence="3">
    <location>
        <begin position="107"/>
        <end position="154"/>
    </location>
</feature>
<feature type="compositionally biased region" description="Polar residues" evidence="3">
    <location>
        <begin position="155"/>
        <end position="168"/>
    </location>
</feature>
<feature type="compositionally biased region" description="Basic and acidic residues" evidence="3">
    <location>
        <begin position="171"/>
        <end position="214"/>
    </location>
</feature>
<feature type="compositionally biased region" description="Basic and acidic residues" evidence="3">
    <location>
        <begin position="237"/>
        <end position="254"/>
    </location>
</feature>
<feature type="compositionally biased region" description="Basic residues" evidence="3">
    <location>
        <begin position="255"/>
        <end position="269"/>
    </location>
</feature>
<feature type="compositionally biased region" description="Basic and acidic residues" evidence="3">
    <location>
        <begin position="270"/>
        <end position="283"/>
    </location>
</feature>
<feature type="binding site" evidence="2">
    <location>
        <begin position="402"/>
        <end position="409"/>
    </location>
    <ligand>
        <name>GTP</name>
        <dbReference type="ChEBI" id="CHEBI:37565"/>
    </ligand>
</feature>
<feature type="binding site" evidence="2">
    <location>
        <begin position="448"/>
        <end position="452"/>
    </location>
    <ligand>
        <name>GTP</name>
        <dbReference type="ChEBI" id="CHEBI:37565"/>
    </ligand>
</feature>
<feature type="binding site" evidence="2">
    <location>
        <begin position="502"/>
        <end position="505"/>
    </location>
    <ligand>
        <name>GTP</name>
        <dbReference type="ChEBI" id="CHEBI:37565"/>
    </ligand>
</feature>